<comment type="function">
    <text evidence="1">Involved in unsaturated fatty acids biosynthesis. Catalyzes the dehydration of short chain beta-hydroxyacyl-ACPs and long chain saturated and unsaturated beta-hydroxyacyl-ACPs.</text>
</comment>
<comment type="catalytic activity">
    <reaction evidence="1">
        <text>a (3R)-hydroxyacyl-[ACP] = a (2E)-enoyl-[ACP] + H2O</text>
        <dbReference type="Rhea" id="RHEA:13097"/>
        <dbReference type="Rhea" id="RHEA-COMP:9925"/>
        <dbReference type="Rhea" id="RHEA-COMP:9945"/>
        <dbReference type="ChEBI" id="CHEBI:15377"/>
        <dbReference type="ChEBI" id="CHEBI:78784"/>
        <dbReference type="ChEBI" id="CHEBI:78827"/>
        <dbReference type="EC" id="4.2.1.59"/>
    </reaction>
</comment>
<comment type="subcellular location">
    <subcellularLocation>
        <location evidence="1">Cytoplasm</location>
    </subcellularLocation>
</comment>
<comment type="similarity">
    <text evidence="1">Belongs to the thioester dehydratase family. FabZ subfamily.</text>
</comment>
<proteinExistence type="inferred from homology"/>
<protein>
    <recommendedName>
        <fullName evidence="1">3-hydroxyacyl-[acyl-carrier-protein] dehydratase FabZ</fullName>
        <ecNumber evidence="1">4.2.1.59</ecNumber>
    </recommendedName>
    <alternativeName>
        <fullName evidence="1">(3R)-hydroxymyristoyl-[acyl-carrier-protein] dehydratase</fullName>
        <shortName evidence="1">(3R)-hydroxymyristoyl-ACP dehydrase</shortName>
    </alternativeName>
    <alternativeName>
        <fullName evidence="1">Beta-hydroxyacyl-ACP dehydratase</fullName>
    </alternativeName>
</protein>
<feature type="chain" id="PRO_1000134704" description="3-hydroxyacyl-[acyl-carrier-protein] dehydratase FabZ">
    <location>
        <begin position="1"/>
        <end position="145"/>
    </location>
</feature>
<feature type="active site" evidence="1">
    <location>
        <position position="51"/>
    </location>
</feature>
<sequence length="145" mass="15921">METLLSFDEIKKIIPHRYPFLLIDRITELEEGKRCTGIKQVSGNEPFFQGHFPEYAVMPGVLIVEALAQVGAVAMLKLEENQGKLAMFTGIDKCRFKSQVTPGDTLTLSVEMTRVKGPIGKGTATAKVGDKLACSCEISFAIIEK</sequence>
<name>FABZ_MACCJ</name>
<reference key="1">
    <citation type="journal article" date="2009" name="J. Bacteriol.">
        <title>Complete genome sequence of Macrococcus caseolyticus strain JCSCS5402, reflecting the ancestral genome of the human-pathogenic staphylococci.</title>
        <authorList>
            <person name="Baba T."/>
            <person name="Kuwahara-Arai K."/>
            <person name="Uchiyama I."/>
            <person name="Takeuchi F."/>
            <person name="Ito T."/>
            <person name="Hiramatsu K."/>
        </authorList>
    </citation>
    <scope>NUCLEOTIDE SEQUENCE [LARGE SCALE GENOMIC DNA]</scope>
    <source>
        <strain>JCSC5402</strain>
    </source>
</reference>
<evidence type="ECO:0000255" key="1">
    <source>
        <dbReference type="HAMAP-Rule" id="MF_00406"/>
    </source>
</evidence>
<gene>
    <name evidence="1" type="primary">fabZ</name>
    <name type="ordered locus">MCCL_1754</name>
</gene>
<accession>B9E8E3</accession>
<organism>
    <name type="scientific">Macrococcus caseolyticus (strain JCSC5402)</name>
    <name type="common">Macrococcoides caseolyticum</name>
    <dbReference type="NCBI Taxonomy" id="458233"/>
    <lineage>
        <taxon>Bacteria</taxon>
        <taxon>Bacillati</taxon>
        <taxon>Bacillota</taxon>
        <taxon>Bacilli</taxon>
        <taxon>Bacillales</taxon>
        <taxon>Staphylococcaceae</taxon>
        <taxon>Macrococcoides</taxon>
    </lineage>
</organism>
<keyword id="KW-0963">Cytoplasm</keyword>
<keyword id="KW-0441">Lipid A biosynthesis</keyword>
<keyword id="KW-0444">Lipid biosynthesis</keyword>
<keyword id="KW-0443">Lipid metabolism</keyword>
<keyword id="KW-0456">Lyase</keyword>
<keyword id="KW-1185">Reference proteome</keyword>
<dbReference type="EC" id="4.2.1.59" evidence="1"/>
<dbReference type="EMBL" id="AP009484">
    <property type="protein sequence ID" value="BAH18461.1"/>
    <property type="molecule type" value="Genomic_DNA"/>
</dbReference>
<dbReference type="RefSeq" id="WP_015912253.1">
    <property type="nucleotide sequence ID" value="NC_011999.1"/>
</dbReference>
<dbReference type="SMR" id="B9E8E3"/>
<dbReference type="STRING" id="458233.MCCL_1754"/>
<dbReference type="KEGG" id="mcl:MCCL_1754"/>
<dbReference type="eggNOG" id="COG0764">
    <property type="taxonomic scope" value="Bacteria"/>
</dbReference>
<dbReference type="HOGENOM" id="CLU_078912_3_0_9"/>
<dbReference type="OrthoDB" id="9772788at2"/>
<dbReference type="Proteomes" id="UP000001383">
    <property type="component" value="Chromosome"/>
</dbReference>
<dbReference type="GO" id="GO:0005737">
    <property type="term" value="C:cytoplasm"/>
    <property type="evidence" value="ECO:0007669"/>
    <property type="project" value="UniProtKB-SubCell"/>
</dbReference>
<dbReference type="GO" id="GO:0016020">
    <property type="term" value="C:membrane"/>
    <property type="evidence" value="ECO:0007669"/>
    <property type="project" value="GOC"/>
</dbReference>
<dbReference type="GO" id="GO:0019171">
    <property type="term" value="F:(3R)-hydroxyacyl-[acyl-carrier-protein] dehydratase activity"/>
    <property type="evidence" value="ECO:0007669"/>
    <property type="project" value="UniProtKB-EC"/>
</dbReference>
<dbReference type="GO" id="GO:0006633">
    <property type="term" value="P:fatty acid biosynthetic process"/>
    <property type="evidence" value="ECO:0007669"/>
    <property type="project" value="UniProtKB-UniRule"/>
</dbReference>
<dbReference type="GO" id="GO:0009245">
    <property type="term" value="P:lipid A biosynthetic process"/>
    <property type="evidence" value="ECO:0007669"/>
    <property type="project" value="UniProtKB-UniRule"/>
</dbReference>
<dbReference type="CDD" id="cd01288">
    <property type="entry name" value="FabZ"/>
    <property type="match status" value="1"/>
</dbReference>
<dbReference type="FunFam" id="3.10.129.10:FF:000001">
    <property type="entry name" value="3-hydroxyacyl-[acyl-carrier-protein] dehydratase FabZ"/>
    <property type="match status" value="1"/>
</dbReference>
<dbReference type="Gene3D" id="3.10.129.10">
    <property type="entry name" value="Hotdog Thioesterase"/>
    <property type="match status" value="1"/>
</dbReference>
<dbReference type="HAMAP" id="MF_00406">
    <property type="entry name" value="FabZ"/>
    <property type="match status" value="1"/>
</dbReference>
<dbReference type="InterPro" id="IPR013114">
    <property type="entry name" value="FabA_FabZ"/>
</dbReference>
<dbReference type="InterPro" id="IPR010084">
    <property type="entry name" value="FabZ"/>
</dbReference>
<dbReference type="InterPro" id="IPR029069">
    <property type="entry name" value="HotDog_dom_sf"/>
</dbReference>
<dbReference type="NCBIfam" id="TIGR01750">
    <property type="entry name" value="fabZ"/>
    <property type="match status" value="1"/>
</dbReference>
<dbReference type="NCBIfam" id="NF000582">
    <property type="entry name" value="PRK00006.1"/>
    <property type="match status" value="1"/>
</dbReference>
<dbReference type="PANTHER" id="PTHR30272">
    <property type="entry name" value="3-HYDROXYACYL-[ACYL-CARRIER-PROTEIN] DEHYDRATASE"/>
    <property type="match status" value="1"/>
</dbReference>
<dbReference type="PANTHER" id="PTHR30272:SF1">
    <property type="entry name" value="3-HYDROXYACYL-[ACYL-CARRIER-PROTEIN] DEHYDRATASE"/>
    <property type="match status" value="1"/>
</dbReference>
<dbReference type="Pfam" id="PF07977">
    <property type="entry name" value="FabA"/>
    <property type="match status" value="1"/>
</dbReference>
<dbReference type="SUPFAM" id="SSF54637">
    <property type="entry name" value="Thioesterase/thiol ester dehydrase-isomerase"/>
    <property type="match status" value="1"/>
</dbReference>